<organism>
    <name type="scientific">Pseudomonas entomophila (strain L48)</name>
    <dbReference type="NCBI Taxonomy" id="384676"/>
    <lineage>
        <taxon>Bacteria</taxon>
        <taxon>Pseudomonadati</taxon>
        <taxon>Pseudomonadota</taxon>
        <taxon>Gammaproteobacteria</taxon>
        <taxon>Pseudomonadales</taxon>
        <taxon>Pseudomonadaceae</taxon>
        <taxon>Pseudomonas</taxon>
    </lineage>
</organism>
<reference key="1">
    <citation type="journal article" date="2006" name="Nat. Biotechnol.">
        <title>Complete genome sequence of the entomopathogenic and metabolically versatile soil bacterium Pseudomonas entomophila.</title>
        <authorList>
            <person name="Vodovar N."/>
            <person name="Vallenet D."/>
            <person name="Cruveiller S."/>
            <person name="Rouy Z."/>
            <person name="Barbe V."/>
            <person name="Acosta C."/>
            <person name="Cattolico L."/>
            <person name="Jubin C."/>
            <person name="Lajus A."/>
            <person name="Segurens B."/>
            <person name="Vacherie B."/>
            <person name="Wincker P."/>
            <person name="Weissenbach J."/>
            <person name="Lemaitre B."/>
            <person name="Medigue C."/>
            <person name="Boccard F."/>
        </authorList>
    </citation>
    <scope>NUCLEOTIDE SEQUENCE [LARGE SCALE GENOMIC DNA]</scope>
    <source>
        <strain>L48</strain>
    </source>
</reference>
<feature type="chain" id="PRO_1000017559" description="Large ribosomal subunit protein bL27">
    <location>
        <begin position="1"/>
        <end position="85"/>
    </location>
</feature>
<feature type="region of interest" description="Disordered" evidence="2">
    <location>
        <begin position="1"/>
        <end position="21"/>
    </location>
</feature>
<keyword id="KW-0687">Ribonucleoprotein</keyword>
<keyword id="KW-0689">Ribosomal protein</keyword>
<accession>Q1IF14</accession>
<name>RL27_PSEE4</name>
<comment type="similarity">
    <text evidence="1">Belongs to the bacterial ribosomal protein bL27 family.</text>
</comment>
<proteinExistence type="inferred from homology"/>
<dbReference type="EMBL" id="CT573326">
    <property type="protein sequence ID" value="CAK13740.1"/>
    <property type="molecule type" value="Genomic_DNA"/>
</dbReference>
<dbReference type="RefSeq" id="WP_003247464.1">
    <property type="nucleotide sequence ID" value="NC_008027.1"/>
</dbReference>
<dbReference type="SMR" id="Q1IF14"/>
<dbReference type="STRING" id="384676.PSEEN0826"/>
<dbReference type="GeneID" id="97166221"/>
<dbReference type="KEGG" id="pen:PSEEN0826"/>
<dbReference type="eggNOG" id="COG0211">
    <property type="taxonomic scope" value="Bacteria"/>
</dbReference>
<dbReference type="HOGENOM" id="CLU_095424_4_1_6"/>
<dbReference type="OrthoDB" id="9803474at2"/>
<dbReference type="Proteomes" id="UP000000658">
    <property type="component" value="Chromosome"/>
</dbReference>
<dbReference type="GO" id="GO:0022625">
    <property type="term" value="C:cytosolic large ribosomal subunit"/>
    <property type="evidence" value="ECO:0007669"/>
    <property type="project" value="TreeGrafter"/>
</dbReference>
<dbReference type="GO" id="GO:0003735">
    <property type="term" value="F:structural constituent of ribosome"/>
    <property type="evidence" value="ECO:0007669"/>
    <property type="project" value="InterPro"/>
</dbReference>
<dbReference type="GO" id="GO:0006412">
    <property type="term" value="P:translation"/>
    <property type="evidence" value="ECO:0007669"/>
    <property type="project" value="UniProtKB-UniRule"/>
</dbReference>
<dbReference type="FunFam" id="2.40.50.100:FF:000001">
    <property type="entry name" value="50S ribosomal protein L27"/>
    <property type="match status" value="1"/>
</dbReference>
<dbReference type="Gene3D" id="2.40.50.100">
    <property type="match status" value="1"/>
</dbReference>
<dbReference type="HAMAP" id="MF_00539">
    <property type="entry name" value="Ribosomal_bL27"/>
    <property type="match status" value="1"/>
</dbReference>
<dbReference type="InterPro" id="IPR001684">
    <property type="entry name" value="Ribosomal_bL27"/>
</dbReference>
<dbReference type="InterPro" id="IPR018261">
    <property type="entry name" value="Ribosomal_bL27_CS"/>
</dbReference>
<dbReference type="NCBIfam" id="TIGR00062">
    <property type="entry name" value="L27"/>
    <property type="match status" value="1"/>
</dbReference>
<dbReference type="PANTHER" id="PTHR15893:SF0">
    <property type="entry name" value="LARGE RIBOSOMAL SUBUNIT PROTEIN BL27M"/>
    <property type="match status" value="1"/>
</dbReference>
<dbReference type="PANTHER" id="PTHR15893">
    <property type="entry name" value="RIBOSOMAL PROTEIN L27"/>
    <property type="match status" value="1"/>
</dbReference>
<dbReference type="Pfam" id="PF01016">
    <property type="entry name" value="Ribosomal_L27"/>
    <property type="match status" value="1"/>
</dbReference>
<dbReference type="PRINTS" id="PR00063">
    <property type="entry name" value="RIBOSOMALL27"/>
</dbReference>
<dbReference type="SUPFAM" id="SSF110324">
    <property type="entry name" value="Ribosomal L27 protein-like"/>
    <property type="match status" value="1"/>
</dbReference>
<dbReference type="PROSITE" id="PS00831">
    <property type="entry name" value="RIBOSOMAL_L27"/>
    <property type="match status" value="1"/>
</dbReference>
<evidence type="ECO:0000255" key="1">
    <source>
        <dbReference type="HAMAP-Rule" id="MF_00539"/>
    </source>
</evidence>
<evidence type="ECO:0000256" key="2">
    <source>
        <dbReference type="SAM" id="MobiDB-lite"/>
    </source>
</evidence>
<evidence type="ECO:0000305" key="3"/>
<sequence length="85" mass="9341">MAHKKAGGSTRNGRDSESKRLGVKMYGGQVIKPGNIIVRQRGTEFHAGYGVGMGKDHTLFAKIEGVIKFEKKGEFMRRYVSIVAA</sequence>
<protein>
    <recommendedName>
        <fullName evidence="1">Large ribosomal subunit protein bL27</fullName>
    </recommendedName>
    <alternativeName>
        <fullName evidence="3">50S ribosomal protein L27</fullName>
    </alternativeName>
</protein>
<gene>
    <name evidence="1" type="primary">rpmA</name>
    <name type="ordered locus">PSEEN0826</name>
</gene>